<protein>
    <recommendedName>
        <fullName evidence="3">Putative antitoxin VapB49</fullName>
    </recommendedName>
</protein>
<proteinExistence type="evidence at protein level"/>
<gene>
    <name evidence="3" type="primary">vapB49</name>
    <name type="ordered locus">Rv3181c</name>
</gene>
<name>VPB49_MYCTU</name>
<sequence>MQLGRKVTSHHDIDRFGVASTADESVYRPLPPRLRLAQVNLSRRRCRTQSDMYKSRFSECTVQSVDVSVTELRAHLSDWLDRARAGGEVVITERGIPIARLAALDSTDTLERLTAEGVIGKATAQRPVAAGRPRPRPQRPVSDRVSDQRR</sequence>
<comment type="function">
    <text evidence="4">Possibly the antitoxin component of a type II toxin-antitoxin (TA) system. Its cognate toxin is VapC49 (Potential).</text>
</comment>
<comment type="induction">
    <text evidence="2">Induced in persister cells in response to D-cycloserine.</text>
</comment>
<comment type="similarity">
    <text evidence="4">Belongs to the phD/YefM antitoxin family.</text>
</comment>
<reference key="1">
    <citation type="journal article" date="1998" name="Nature">
        <title>Deciphering the biology of Mycobacterium tuberculosis from the complete genome sequence.</title>
        <authorList>
            <person name="Cole S.T."/>
            <person name="Brosch R."/>
            <person name="Parkhill J."/>
            <person name="Garnier T."/>
            <person name="Churcher C.M."/>
            <person name="Harris D.E."/>
            <person name="Gordon S.V."/>
            <person name="Eiglmeier K."/>
            <person name="Gas S."/>
            <person name="Barry C.E. III"/>
            <person name="Tekaia F."/>
            <person name="Badcock K."/>
            <person name="Basham D."/>
            <person name="Brown D."/>
            <person name="Chillingworth T."/>
            <person name="Connor R."/>
            <person name="Davies R.M."/>
            <person name="Devlin K."/>
            <person name="Feltwell T."/>
            <person name="Gentles S."/>
            <person name="Hamlin N."/>
            <person name="Holroyd S."/>
            <person name="Hornsby T."/>
            <person name="Jagels K."/>
            <person name="Krogh A."/>
            <person name="McLean J."/>
            <person name="Moule S."/>
            <person name="Murphy L.D."/>
            <person name="Oliver S."/>
            <person name="Osborne J."/>
            <person name="Quail M.A."/>
            <person name="Rajandream M.A."/>
            <person name="Rogers J."/>
            <person name="Rutter S."/>
            <person name="Seeger K."/>
            <person name="Skelton S."/>
            <person name="Squares S."/>
            <person name="Squares R."/>
            <person name="Sulston J.E."/>
            <person name="Taylor K."/>
            <person name="Whitehead S."/>
            <person name="Barrell B.G."/>
        </authorList>
    </citation>
    <scope>NUCLEOTIDE SEQUENCE [LARGE SCALE GENOMIC DNA]</scope>
    <source>
        <strain>ATCC 25618 / H37Rv</strain>
    </source>
</reference>
<reference key="2">
    <citation type="journal article" date="2009" name="PLoS Genet.">
        <title>Comprehensive functional analysis of Mycobacterium tuberculosis toxin-antitoxin systems: implications for pathogenesis, stress responses, and evolution.</title>
        <authorList>
            <person name="Ramage H.R."/>
            <person name="Connolly L.E."/>
            <person name="Cox J.S."/>
        </authorList>
    </citation>
    <scope>POSSIBLE FUNCTION</scope>
    <source>
        <strain>ATCC 35801 / TMC 107 / Erdman</strain>
    </source>
</reference>
<reference key="3">
    <citation type="journal article" date="2011" name="MBio">
        <title>Characterization and transcriptome analysis of Mycobacterium tuberculosis persisters.</title>
        <authorList>
            <person name="Keren I."/>
            <person name="Minami S."/>
            <person name="Rubin E."/>
            <person name="Lewis K."/>
        </authorList>
    </citation>
    <scope>INDUCTION IN PERSISTER CELLS</scope>
    <source>
        <strain>ATCC 25618 / H37Rv</strain>
    </source>
</reference>
<reference key="4">
    <citation type="journal article" date="2011" name="Mol. Cell. Proteomics">
        <title>Proteogenomic analysis of Mycobacterium tuberculosis by high resolution mass spectrometry.</title>
        <authorList>
            <person name="Kelkar D.S."/>
            <person name="Kumar D."/>
            <person name="Kumar P."/>
            <person name="Balakrishnan L."/>
            <person name="Muthusamy B."/>
            <person name="Yadav A.K."/>
            <person name="Shrivastava P."/>
            <person name="Marimuthu A."/>
            <person name="Anand S."/>
            <person name="Sundaram H."/>
            <person name="Kingsbury R."/>
            <person name="Harsha H.C."/>
            <person name="Nair B."/>
            <person name="Prasad T.S."/>
            <person name="Chauhan D.S."/>
            <person name="Katoch K."/>
            <person name="Katoch V.M."/>
            <person name="Kumar P."/>
            <person name="Chaerkady R."/>
            <person name="Ramachandran S."/>
            <person name="Dash D."/>
            <person name="Pandey A."/>
        </authorList>
    </citation>
    <scope>IDENTIFICATION BY MASS SPECTROMETRY [LARGE SCALE ANALYSIS]</scope>
    <source>
        <strain>ATCC 25618 / H37Rv</strain>
    </source>
</reference>
<reference key="5">
    <citation type="journal article" date="2014" name="Toxins">
        <title>Multiple toxin-antitoxin systems in Mycobacterium tuberculosis.</title>
        <authorList>
            <person name="Sala A."/>
            <person name="Bordes P."/>
            <person name="Genevaux P."/>
        </authorList>
    </citation>
    <scope>GENE NAME</scope>
    <scope>DISCUSSION OF FUNCTION</scope>
    <scope>REVIEW</scope>
    <source>
        <strain>ATCC 25618 / H37Rv</strain>
    </source>
</reference>
<feature type="chain" id="PRO_0000408049" description="Putative antitoxin VapB49">
    <location>
        <begin position="1"/>
        <end position="150"/>
    </location>
</feature>
<feature type="region of interest" description="Disordered" evidence="1">
    <location>
        <begin position="124"/>
        <end position="150"/>
    </location>
</feature>
<feature type="compositionally biased region" description="Basic and acidic residues" evidence="1">
    <location>
        <begin position="141"/>
        <end position="150"/>
    </location>
</feature>
<keyword id="KW-1185">Reference proteome</keyword>
<keyword id="KW-1277">Toxin-antitoxin system</keyword>
<dbReference type="EMBL" id="AL123456">
    <property type="protein sequence ID" value="CCP45992.1"/>
    <property type="molecule type" value="Genomic_DNA"/>
</dbReference>
<dbReference type="PIR" id="C70949">
    <property type="entry name" value="C70949"/>
</dbReference>
<dbReference type="RefSeq" id="NP_217697.1">
    <property type="nucleotide sequence ID" value="NC_000962.3"/>
</dbReference>
<dbReference type="RefSeq" id="WP_003899953.1">
    <property type="nucleotide sequence ID" value="NZ_NVQJ01000019.1"/>
</dbReference>
<dbReference type="SMR" id="P9WF15"/>
<dbReference type="STRING" id="83332.Rv3181c"/>
<dbReference type="PaxDb" id="83332-Rv3181c"/>
<dbReference type="DNASU" id="888787"/>
<dbReference type="GeneID" id="888787"/>
<dbReference type="KEGG" id="mtu:Rv3181c"/>
<dbReference type="KEGG" id="mtv:RVBD_3181c"/>
<dbReference type="TubercuList" id="Rv3181c"/>
<dbReference type="eggNOG" id="COG4118">
    <property type="taxonomic scope" value="Bacteria"/>
</dbReference>
<dbReference type="InParanoid" id="P9WF15"/>
<dbReference type="OrthoDB" id="4419580at2"/>
<dbReference type="Proteomes" id="UP000001584">
    <property type="component" value="Chromosome"/>
</dbReference>
<dbReference type="GO" id="GO:0005886">
    <property type="term" value="C:plasma membrane"/>
    <property type="evidence" value="ECO:0007005"/>
    <property type="project" value="MTBBASE"/>
</dbReference>
<dbReference type="GO" id="GO:0097351">
    <property type="term" value="F:toxin sequestering activity"/>
    <property type="evidence" value="ECO:0000318"/>
    <property type="project" value="GO_Central"/>
</dbReference>
<dbReference type="FunFam" id="3.40.1620.10:FF:000002">
    <property type="entry name" value="Antitoxin"/>
    <property type="match status" value="1"/>
</dbReference>
<dbReference type="Gene3D" id="3.40.1620.10">
    <property type="entry name" value="YefM-like domain"/>
    <property type="match status" value="1"/>
</dbReference>
<dbReference type="InterPro" id="IPR006442">
    <property type="entry name" value="Antitoxin_Phd/YefM"/>
</dbReference>
<dbReference type="InterPro" id="IPR051416">
    <property type="entry name" value="phD-YefM_TA_antitoxins"/>
</dbReference>
<dbReference type="InterPro" id="IPR036165">
    <property type="entry name" value="YefM-like_sf"/>
</dbReference>
<dbReference type="NCBIfam" id="TIGR01552">
    <property type="entry name" value="phd_fam"/>
    <property type="match status" value="1"/>
</dbReference>
<dbReference type="PANTHER" id="PTHR35377:SF5">
    <property type="entry name" value="ANTITOXIN VAPB46"/>
    <property type="match status" value="1"/>
</dbReference>
<dbReference type="PANTHER" id="PTHR35377">
    <property type="entry name" value="ANTITOXIN VAPB49-RELATED-RELATED"/>
    <property type="match status" value="1"/>
</dbReference>
<dbReference type="Pfam" id="PF02604">
    <property type="entry name" value="PhdYeFM_antitox"/>
    <property type="match status" value="1"/>
</dbReference>
<dbReference type="SUPFAM" id="SSF143120">
    <property type="entry name" value="YefM-like"/>
    <property type="match status" value="1"/>
</dbReference>
<evidence type="ECO:0000256" key="1">
    <source>
        <dbReference type="SAM" id="MobiDB-lite"/>
    </source>
</evidence>
<evidence type="ECO:0000269" key="2">
    <source>
    </source>
</evidence>
<evidence type="ECO:0000303" key="3">
    <source>
    </source>
</evidence>
<evidence type="ECO:0000305" key="4"/>
<organism>
    <name type="scientific">Mycobacterium tuberculosis (strain ATCC 25618 / H37Rv)</name>
    <dbReference type="NCBI Taxonomy" id="83332"/>
    <lineage>
        <taxon>Bacteria</taxon>
        <taxon>Bacillati</taxon>
        <taxon>Actinomycetota</taxon>
        <taxon>Actinomycetes</taxon>
        <taxon>Mycobacteriales</taxon>
        <taxon>Mycobacteriaceae</taxon>
        <taxon>Mycobacterium</taxon>
        <taxon>Mycobacterium tuberculosis complex</taxon>
    </lineage>
</organism>
<accession>P9WF15</accession>
<accession>L0TBS0</accession>
<accession>O53331</accession>
<accession>Q7D5Z5</accession>